<sequence length="84" mass="9399">SSGGLLLLLGLLTLCAELIPVSSRQRHRDCDKPPDKGNCGSVRRAFYYDTRLKTCKAFPYRGCNGNGNHFKTETLCRCECLVYP</sequence>
<evidence type="ECO:0000250" key="1"/>
<evidence type="ECO:0000255" key="2">
    <source>
        <dbReference type="PROSITE-ProRule" id="PRU00031"/>
    </source>
</evidence>
<evidence type="ECO:0000305" key="3"/>
<dbReference type="EMBL" id="AB158301">
    <property type="protein sequence ID" value="BAD06269.1"/>
    <property type="molecule type" value="mRNA"/>
</dbReference>
<dbReference type="SMR" id="Q75S49"/>
<dbReference type="GO" id="GO:0005615">
    <property type="term" value="C:extracellular space"/>
    <property type="evidence" value="ECO:0007669"/>
    <property type="project" value="TreeGrafter"/>
</dbReference>
<dbReference type="GO" id="GO:0004867">
    <property type="term" value="F:serine-type endopeptidase inhibitor activity"/>
    <property type="evidence" value="ECO:0007669"/>
    <property type="project" value="InterPro"/>
</dbReference>
<dbReference type="GO" id="GO:0090729">
    <property type="term" value="F:toxin activity"/>
    <property type="evidence" value="ECO:0007669"/>
    <property type="project" value="UniProtKB-KW"/>
</dbReference>
<dbReference type="Gene3D" id="4.10.410.10">
    <property type="entry name" value="Pancreatic trypsin inhibitor Kunitz domain"/>
    <property type="match status" value="1"/>
</dbReference>
<dbReference type="InterPro" id="IPR002223">
    <property type="entry name" value="Kunitz_BPTI"/>
</dbReference>
<dbReference type="InterPro" id="IPR036880">
    <property type="entry name" value="Kunitz_BPTI_sf"/>
</dbReference>
<dbReference type="InterPro" id="IPR020901">
    <property type="entry name" value="Prtase_inh_Kunz-CS"/>
</dbReference>
<dbReference type="InterPro" id="IPR050098">
    <property type="entry name" value="TFPI/VKTCI-like"/>
</dbReference>
<dbReference type="PANTHER" id="PTHR10083:SF374">
    <property type="entry name" value="BPTI_KUNITZ INHIBITOR DOMAIN-CONTAINING PROTEIN"/>
    <property type="match status" value="1"/>
</dbReference>
<dbReference type="PANTHER" id="PTHR10083">
    <property type="entry name" value="KUNITZ-TYPE PROTEASE INHIBITOR-RELATED"/>
    <property type="match status" value="1"/>
</dbReference>
<dbReference type="Pfam" id="PF00014">
    <property type="entry name" value="Kunitz_BPTI"/>
    <property type="match status" value="1"/>
</dbReference>
<dbReference type="PRINTS" id="PR00759">
    <property type="entry name" value="BASICPTASE"/>
</dbReference>
<dbReference type="SMART" id="SM00131">
    <property type="entry name" value="KU"/>
    <property type="match status" value="1"/>
</dbReference>
<dbReference type="SUPFAM" id="SSF57362">
    <property type="entry name" value="BPTI-like"/>
    <property type="match status" value="1"/>
</dbReference>
<dbReference type="PROSITE" id="PS00280">
    <property type="entry name" value="BPTI_KUNITZ_1"/>
    <property type="match status" value="1"/>
</dbReference>
<dbReference type="PROSITE" id="PS50279">
    <property type="entry name" value="BPTI_KUNITZ_2"/>
    <property type="match status" value="1"/>
</dbReference>
<proteinExistence type="evidence at transcript level"/>
<reference key="1">
    <citation type="journal article" date="2006" name="Toxicon">
        <title>Molecular cloning of the major lethal toxins from two kraits (Bungarus flaviceps and Bungarus candidus).</title>
        <authorList>
            <person name="Yanoshita R."/>
            <person name="Ogawa Y."/>
            <person name="Murayama N."/>
            <person name="Omori-Satoh T."/>
            <person name="Saguchi K."/>
            <person name="Higuchi S."/>
            <person name="Khow O."/>
            <person name="Chanhome L."/>
            <person name="Samejima Y."/>
            <person name="Sitprija V."/>
        </authorList>
    </citation>
    <scope>NUCLEOTIDE SEQUENCE [MRNA]</scope>
    <source>
        <tissue>Venom gland</tissue>
    </source>
</reference>
<comment type="function">
    <text evidence="1">Beta-2 bungarotoxin is a presynaptic neurotoxin of the venom. The B chain is homologous to venom basic protease inhibitors but has no protease inhibitor activity and is non-toxic (By similarity).</text>
</comment>
<comment type="subunit">
    <text evidence="1">Heterodimer; disulfide-linked. The A chain has phospholipase A2 activity and the B chain shows homology with the basic protease inhibitors (By similarity).</text>
</comment>
<comment type="subcellular location">
    <subcellularLocation>
        <location evidence="1">Secreted</location>
    </subcellularLocation>
</comment>
<comment type="tissue specificity">
    <text>Expressed by the venom gland.</text>
</comment>
<comment type="similarity">
    <text evidence="3">Belongs to the venom Kunitz-type family.</text>
</comment>
<feature type="signal peptide" evidence="1">
    <location>
        <begin position="1" status="less than"/>
        <end position="23"/>
    </location>
</feature>
<feature type="chain" id="PRO_5000051029" description="Kunitz-type serine protease inhibitor homolog beta-bungarotoxin B4 chain">
    <location>
        <begin position="24"/>
        <end position="84"/>
    </location>
</feature>
<feature type="domain" description="BPTI/Kunitz inhibitor" evidence="2">
    <location>
        <begin position="30"/>
        <end position="80"/>
    </location>
</feature>
<feature type="disulfide bond" evidence="2">
    <location>
        <begin position="30"/>
        <end position="80"/>
    </location>
</feature>
<feature type="disulfide bond" evidence="2">
    <location>
        <begin position="39"/>
        <end position="63"/>
    </location>
</feature>
<feature type="disulfide bond" evidence="2">
    <location>
        <begin position="55"/>
        <end position="76"/>
    </location>
</feature>
<feature type="disulfide bond" description="Interchain (with an A chain)" evidence="2">
    <location>
        <position position="78"/>
    </location>
</feature>
<feature type="non-terminal residue">
    <location>
        <position position="1"/>
    </location>
</feature>
<name>VKTH4_BUNCA</name>
<keyword id="KW-1015">Disulfide bond</keyword>
<keyword id="KW-0528">Neurotoxin</keyword>
<keyword id="KW-0638">Presynaptic neurotoxin</keyword>
<keyword id="KW-0964">Secreted</keyword>
<keyword id="KW-0732">Signal</keyword>
<keyword id="KW-0800">Toxin</keyword>
<protein>
    <recommendedName>
        <fullName>Kunitz-type serine protease inhibitor homolog beta-bungarotoxin B4 chain</fullName>
    </recommendedName>
</protein>
<accession>Q75S49</accession>
<organism>
    <name type="scientific">Bungarus candidus</name>
    <name type="common">Malayan krait</name>
    <dbReference type="NCBI Taxonomy" id="92438"/>
    <lineage>
        <taxon>Eukaryota</taxon>
        <taxon>Metazoa</taxon>
        <taxon>Chordata</taxon>
        <taxon>Craniata</taxon>
        <taxon>Vertebrata</taxon>
        <taxon>Euteleostomi</taxon>
        <taxon>Lepidosauria</taxon>
        <taxon>Squamata</taxon>
        <taxon>Bifurcata</taxon>
        <taxon>Unidentata</taxon>
        <taxon>Episquamata</taxon>
        <taxon>Toxicofera</taxon>
        <taxon>Serpentes</taxon>
        <taxon>Colubroidea</taxon>
        <taxon>Elapidae</taxon>
        <taxon>Bungarinae</taxon>
        <taxon>Bungarus</taxon>
    </lineage>
</organism>